<organism>
    <name type="scientific">Azoarcus sp. (strain BH72)</name>
    <dbReference type="NCBI Taxonomy" id="418699"/>
    <lineage>
        <taxon>Bacteria</taxon>
        <taxon>Pseudomonadati</taxon>
        <taxon>Pseudomonadota</taxon>
        <taxon>Betaproteobacteria</taxon>
        <taxon>Rhodocyclales</taxon>
        <taxon>Zoogloeaceae</taxon>
        <taxon>Azoarcus</taxon>
    </lineage>
</organism>
<sequence length="275" mass="30351">MQIHTTVASLRAARARAGRVALVPTMGNLHDGHIALMRQAAGRADCVIASIFVNRLQFGPNEDFDKYPRTLQADIERLEAAGVAHLFAPDESEMYPQPQRYHVDPAPAQVSILDGEFRPGHFRGVATVVLKLLNIVQPDVALFGKKDYQQLMVLSNMVREFALPIEVLPGDTVRADDGLALSSRNGYLSAAERAEAPRLYALLCRIRDAVRAGDHDFLKLETEAMAQLEAHGWAPDYIAIRRQADLQPPVHADDPLVVLAAARLGRTRLIDNLEI</sequence>
<comment type="function">
    <text evidence="1">Catalyzes the condensation of pantoate with beta-alanine in an ATP-dependent reaction via a pantoyl-adenylate intermediate.</text>
</comment>
<comment type="catalytic activity">
    <reaction evidence="1">
        <text>(R)-pantoate + beta-alanine + ATP = (R)-pantothenate + AMP + diphosphate + H(+)</text>
        <dbReference type="Rhea" id="RHEA:10912"/>
        <dbReference type="ChEBI" id="CHEBI:15378"/>
        <dbReference type="ChEBI" id="CHEBI:15980"/>
        <dbReference type="ChEBI" id="CHEBI:29032"/>
        <dbReference type="ChEBI" id="CHEBI:30616"/>
        <dbReference type="ChEBI" id="CHEBI:33019"/>
        <dbReference type="ChEBI" id="CHEBI:57966"/>
        <dbReference type="ChEBI" id="CHEBI:456215"/>
        <dbReference type="EC" id="6.3.2.1"/>
    </reaction>
</comment>
<comment type="pathway">
    <text evidence="1">Cofactor biosynthesis; (R)-pantothenate biosynthesis; (R)-pantothenate from (R)-pantoate and beta-alanine: step 1/1.</text>
</comment>
<comment type="subunit">
    <text evidence="1">Homodimer.</text>
</comment>
<comment type="subcellular location">
    <subcellularLocation>
        <location evidence="1">Cytoplasm</location>
    </subcellularLocation>
</comment>
<comment type="miscellaneous">
    <text evidence="1">The reaction proceeds by a bi uni uni bi ping pong mechanism.</text>
</comment>
<comment type="similarity">
    <text evidence="1">Belongs to the pantothenate synthetase family.</text>
</comment>
<keyword id="KW-0067">ATP-binding</keyword>
<keyword id="KW-0963">Cytoplasm</keyword>
<keyword id="KW-0436">Ligase</keyword>
<keyword id="KW-0547">Nucleotide-binding</keyword>
<keyword id="KW-0566">Pantothenate biosynthesis</keyword>
<keyword id="KW-1185">Reference proteome</keyword>
<accession>A1KAA6</accession>
<feature type="chain" id="PRO_0000305394" description="Pantothenate synthetase">
    <location>
        <begin position="1"/>
        <end position="275"/>
    </location>
</feature>
<feature type="active site" description="Proton donor" evidence="1">
    <location>
        <position position="33"/>
    </location>
</feature>
<feature type="binding site" evidence="1">
    <location>
        <begin position="26"/>
        <end position="33"/>
    </location>
    <ligand>
        <name>ATP</name>
        <dbReference type="ChEBI" id="CHEBI:30616"/>
    </ligand>
</feature>
<feature type="binding site" evidence="1">
    <location>
        <position position="57"/>
    </location>
    <ligand>
        <name>(R)-pantoate</name>
        <dbReference type="ChEBI" id="CHEBI:15980"/>
    </ligand>
</feature>
<feature type="binding site" evidence="1">
    <location>
        <position position="57"/>
    </location>
    <ligand>
        <name>beta-alanine</name>
        <dbReference type="ChEBI" id="CHEBI:57966"/>
    </ligand>
</feature>
<feature type="binding site" evidence="1">
    <location>
        <begin position="144"/>
        <end position="147"/>
    </location>
    <ligand>
        <name>ATP</name>
        <dbReference type="ChEBI" id="CHEBI:30616"/>
    </ligand>
</feature>
<feature type="binding site" evidence="1">
    <location>
        <position position="150"/>
    </location>
    <ligand>
        <name>(R)-pantoate</name>
        <dbReference type="ChEBI" id="CHEBI:15980"/>
    </ligand>
</feature>
<feature type="binding site" evidence="1">
    <location>
        <position position="173"/>
    </location>
    <ligand>
        <name>ATP</name>
        <dbReference type="ChEBI" id="CHEBI:30616"/>
    </ligand>
</feature>
<feature type="binding site" evidence="1">
    <location>
        <begin position="181"/>
        <end position="184"/>
    </location>
    <ligand>
        <name>ATP</name>
        <dbReference type="ChEBI" id="CHEBI:30616"/>
    </ligand>
</feature>
<name>PANC_AZOSB</name>
<reference key="1">
    <citation type="journal article" date="2006" name="Nat. Biotechnol.">
        <title>Complete genome of the mutualistic, N2-fixing grass endophyte Azoarcus sp. strain BH72.</title>
        <authorList>
            <person name="Krause A."/>
            <person name="Ramakumar A."/>
            <person name="Bartels D."/>
            <person name="Battistoni F."/>
            <person name="Bekel T."/>
            <person name="Boch J."/>
            <person name="Boehm M."/>
            <person name="Friedrich F."/>
            <person name="Hurek T."/>
            <person name="Krause L."/>
            <person name="Linke B."/>
            <person name="McHardy A.C."/>
            <person name="Sarkar A."/>
            <person name="Schneiker S."/>
            <person name="Syed A.A."/>
            <person name="Thauer R."/>
            <person name="Vorhoelter F.-J."/>
            <person name="Weidner S."/>
            <person name="Puehler A."/>
            <person name="Reinhold-Hurek B."/>
            <person name="Kaiser O."/>
            <person name="Goesmann A."/>
        </authorList>
    </citation>
    <scope>NUCLEOTIDE SEQUENCE [LARGE SCALE GENOMIC DNA]</scope>
    <source>
        <strain>BH72</strain>
    </source>
</reference>
<dbReference type="EC" id="6.3.2.1" evidence="1"/>
<dbReference type="EMBL" id="AM406670">
    <property type="protein sequence ID" value="CAL95762.1"/>
    <property type="molecule type" value="Genomic_DNA"/>
</dbReference>
<dbReference type="RefSeq" id="WP_011766870.1">
    <property type="nucleotide sequence ID" value="NC_008702.1"/>
</dbReference>
<dbReference type="SMR" id="A1KAA6"/>
<dbReference type="STRING" id="62928.azo3145"/>
<dbReference type="KEGG" id="aoa:dqs_3277"/>
<dbReference type="KEGG" id="azo:azo3145"/>
<dbReference type="eggNOG" id="COG0414">
    <property type="taxonomic scope" value="Bacteria"/>
</dbReference>
<dbReference type="HOGENOM" id="CLU_047148_0_0_4"/>
<dbReference type="OrthoDB" id="9773087at2"/>
<dbReference type="UniPathway" id="UPA00028">
    <property type="reaction ID" value="UER00005"/>
</dbReference>
<dbReference type="Proteomes" id="UP000002588">
    <property type="component" value="Chromosome"/>
</dbReference>
<dbReference type="GO" id="GO:0005829">
    <property type="term" value="C:cytosol"/>
    <property type="evidence" value="ECO:0007669"/>
    <property type="project" value="TreeGrafter"/>
</dbReference>
<dbReference type="GO" id="GO:0005524">
    <property type="term" value="F:ATP binding"/>
    <property type="evidence" value="ECO:0007669"/>
    <property type="project" value="UniProtKB-KW"/>
</dbReference>
<dbReference type="GO" id="GO:0004592">
    <property type="term" value="F:pantoate-beta-alanine ligase activity"/>
    <property type="evidence" value="ECO:0007669"/>
    <property type="project" value="UniProtKB-UniRule"/>
</dbReference>
<dbReference type="GO" id="GO:0015940">
    <property type="term" value="P:pantothenate biosynthetic process"/>
    <property type="evidence" value="ECO:0007669"/>
    <property type="project" value="UniProtKB-UniRule"/>
</dbReference>
<dbReference type="CDD" id="cd00560">
    <property type="entry name" value="PanC"/>
    <property type="match status" value="1"/>
</dbReference>
<dbReference type="FunFam" id="3.30.1300.10:FF:000001">
    <property type="entry name" value="Pantothenate synthetase"/>
    <property type="match status" value="1"/>
</dbReference>
<dbReference type="Gene3D" id="3.40.50.620">
    <property type="entry name" value="HUPs"/>
    <property type="match status" value="1"/>
</dbReference>
<dbReference type="Gene3D" id="3.30.1300.10">
    <property type="entry name" value="Pantoate-beta-alanine ligase, C-terminal domain"/>
    <property type="match status" value="1"/>
</dbReference>
<dbReference type="HAMAP" id="MF_00158">
    <property type="entry name" value="PanC"/>
    <property type="match status" value="1"/>
</dbReference>
<dbReference type="InterPro" id="IPR003721">
    <property type="entry name" value="Pantoate_ligase"/>
</dbReference>
<dbReference type="InterPro" id="IPR042176">
    <property type="entry name" value="Pantoate_ligase_C"/>
</dbReference>
<dbReference type="InterPro" id="IPR014729">
    <property type="entry name" value="Rossmann-like_a/b/a_fold"/>
</dbReference>
<dbReference type="NCBIfam" id="TIGR00018">
    <property type="entry name" value="panC"/>
    <property type="match status" value="1"/>
</dbReference>
<dbReference type="PANTHER" id="PTHR21299">
    <property type="entry name" value="CYTIDYLATE KINASE/PANTOATE-BETA-ALANINE LIGASE"/>
    <property type="match status" value="1"/>
</dbReference>
<dbReference type="PANTHER" id="PTHR21299:SF1">
    <property type="entry name" value="PANTOATE--BETA-ALANINE LIGASE"/>
    <property type="match status" value="1"/>
</dbReference>
<dbReference type="Pfam" id="PF02569">
    <property type="entry name" value="Pantoate_ligase"/>
    <property type="match status" value="1"/>
</dbReference>
<dbReference type="SUPFAM" id="SSF52374">
    <property type="entry name" value="Nucleotidylyl transferase"/>
    <property type="match status" value="1"/>
</dbReference>
<gene>
    <name evidence="1" type="primary">panC</name>
    <name type="ordered locus">azo3145</name>
</gene>
<evidence type="ECO:0000255" key="1">
    <source>
        <dbReference type="HAMAP-Rule" id="MF_00158"/>
    </source>
</evidence>
<protein>
    <recommendedName>
        <fullName evidence="1">Pantothenate synthetase</fullName>
        <shortName evidence="1">PS</shortName>
        <ecNumber evidence="1">6.3.2.1</ecNumber>
    </recommendedName>
    <alternativeName>
        <fullName evidence="1">Pantoate--beta-alanine ligase</fullName>
    </alternativeName>
    <alternativeName>
        <fullName evidence="1">Pantoate-activating enzyme</fullName>
    </alternativeName>
</protein>
<proteinExistence type="inferred from homology"/>